<keyword id="KW-0378">Hydrolase</keyword>
<keyword id="KW-0554">One-carbon metabolism</keyword>
<keyword id="KW-0658">Purine biosynthesis</keyword>
<keyword id="KW-1185">Reference proteome</keyword>
<accession>Q03432</accession>
<organism>
    <name type="scientific">Haemophilus influenzae (strain ATCC 51907 / DSM 11121 / KW20 / Rd)</name>
    <dbReference type="NCBI Taxonomy" id="71421"/>
    <lineage>
        <taxon>Bacteria</taxon>
        <taxon>Pseudomonadati</taxon>
        <taxon>Pseudomonadota</taxon>
        <taxon>Gammaproteobacteria</taxon>
        <taxon>Pasteurellales</taxon>
        <taxon>Pasteurellaceae</taxon>
        <taxon>Haemophilus</taxon>
    </lineage>
</organism>
<proteinExistence type="inferred from homology"/>
<protein>
    <recommendedName>
        <fullName evidence="1">Formyltetrahydrofolate deformylase</fullName>
        <ecNumber evidence="1">3.5.1.10</ecNumber>
    </recommendedName>
    <alternativeName>
        <fullName evidence="1">Formyl-FH(4) hydrolase</fullName>
    </alternativeName>
</protein>
<dbReference type="EC" id="3.5.1.10" evidence="1"/>
<dbReference type="EMBL" id="L42023">
    <property type="protein sequence ID" value="AAC23236.1"/>
    <property type="molecule type" value="Genomic_DNA"/>
</dbReference>
<dbReference type="EMBL" id="L04686">
    <property type="protein sequence ID" value="AAA24942.1"/>
    <property type="molecule type" value="Genomic_DNA"/>
</dbReference>
<dbReference type="PIR" id="E64131">
    <property type="entry name" value="E64131"/>
</dbReference>
<dbReference type="RefSeq" id="NP_439733.1">
    <property type="nucleotide sequence ID" value="NC_000907.1"/>
</dbReference>
<dbReference type="SMR" id="Q03432"/>
<dbReference type="STRING" id="71421.HI_1588"/>
<dbReference type="EnsemblBacteria" id="AAC23236">
    <property type="protein sequence ID" value="AAC23236"/>
    <property type="gene ID" value="HI_1588"/>
</dbReference>
<dbReference type="KEGG" id="hin:HI_1588"/>
<dbReference type="PATRIC" id="fig|71421.8.peg.1662"/>
<dbReference type="eggNOG" id="COG0788">
    <property type="taxonomic scope" value="Bacteria"/>
</dbReference>
<dbReference type="HOGENOM" id="CLU_038395_3_2_6"/>
<dbReference type="OrthoDB" id="9806170at2"/>
<dbReference type="PhylomeDB" id="Q03432"/>
<dbReference type="BioCyc" id="HINF71421:G1GJ1-1604-MONOMER"/>
<dbReference type="UniPathway" id="UPA00074">
    <property type="reaction ID" value="UER00170"/>
</dbReference>
<dbReference type="Proteomes" id="UP000000579">
    <property type="component" value="Chromosome"/>
</dbReference>
<dbReference type="GO" id="GO:0008864">
    <property type="term" value="F:formyltetrahydrofolate deformylase activity"/>
    <property type="evidence" value="ECO:0007669"/>
    <property type="project" value="UniProtKB-UniRule"/>
</dbReference>
<dbReference type="GO" id="GO:0006189">
    <property type="term" value="P:'de novo' IMP biosynthetic process"/>
    <property type="evidence" value="ECO:0007669"/>
    <property type="project" value="UniProtKB-UniRule"/>
</dbReference>
<dbReference type="GO" id="GO:0006730">
    <property type="term" value="P:one-carbon metabolic process"/>
    <property type="evidence" value="ECO:0007669"/>
    <property type="project" value="UniProtKB-KW"/>
</dbReference>
<dbReference type="CDD" id="cd04875">
    <property type="entry name" value="ACT_F4HF-DF"/>
    <property type="match status" value="1"/>
</dbReference>
<dbReference type="CDD" id="cd08648">
    <property type="entry name" value="FMT_core_Formyl-FH4-Hydrolase_C"/>
    <property type="match status" value="1"/>
</dbReference>
<dbReference type="Gene3D" id="3.30.70.260">
    <property type="match status" value="1"/>
</dbReference>
<dbReference type="Gene3D" id="3.40.50.170">
    <property type="entry name" value="Formyl transferase, N-terminal domain"/>
    <property type="match status" value="1"/>
</dbReference>
<dbReference type="HAMAP" id="MF_01927">
    <property type="entry name" value="PurU"/>
    <property type="match status" value="1"/>
</dbReference>
<dbReference type="InterPro" id="IPR045865">
    <property type="entry name" value="ACT-like_dom_sf"/>
</dbReference>
<dbReference type="InterPro" id="IPR002912">
    <property type="entry name" value="ACT_dom"/>
</dbReference>
<dbReference type="InterPro" id="IPR041729">
    <property type="entry name" value="Formyl-FH4-Hydrolase_C"/>
</dbReference>
<dbReference type="InterPro" id="IPR002376">
    <property type="entry name" value="Formyl_transf_N"/>
</dbReference>
<dbReference type="InterPro" id="IPR036477">
    <property type="entry name" value="Formyl_transf_N_sf"/>
</dbReference>
<dbReference type="InterPro" id="IPR004810">
    <property type="entry name" value="PurU"/>
</dbReference>
<dbReference type="InterPro" id="IPR044074">
    <property type="entry name" value="PurU_ACT"/>
</dbReference>
<dbReference type="NCBIfam" id="NF004684">
    <property type="entry name" value="PRK06027.1"/>
    <property type="match status" value="1"/>
</dbReference>
<dbReference type="NCBIfam" id="TIGR00655">
    <property type="entry name" value="PurU"/>
    <property type="match status" value="1"/>
</dbReference>
<dbReference type="PANTHER" id="PTHR42706">
    <property type="entry name" value="FORMYLTETRAHYDROFOLATE DEFORMYLASE"/>
    <property type="match status" value="1"/>
</dbReference>
<dbReference type="PANTHER" id="PTHR42706:SF1">
    <property type="entry name" value="FORMYLTETRAHYDROFOLATE DEFORMYLASE 2, MITOCHONDRIAL"/>
    <property type="match status" value="1"/>
</dbReference>
<dbReference type="Pfam" id="PF01842">
    <property type="entry name" value="ACT"/>
    <property type="match status" value="1"/>
</dbReference>
<dbReference type="Pfam" id="PF00551">
    <property type="entry name" value="Formyl_trans_N"/>
    <property type="match status" value="1"/>
</dbReference>
<dbReference type="PIRSF" id="PIRSF036480">
    <property type="entry name" value="FormyFH4_hydr"/>
    <property type="match status" value="1"/>
</dbReference>
<dbReference type="PRINTS" id="PR01575">
    <property type="entry name" value="FFH4HYDRLASE"/>
</dbReference>
<dbReference type="SUPFAM" id="SSF55021">
    <property type="entry name" value="ACT-like"/>
    <property type="match status" value="1"/>
</dbReference>
<dbReference type="SUPFAM" id="SSF53328">
    <property type="entry name" value="Formyltransferase"/>
    <property type="match status" value="1"/>
</dbReference>
<dbReference type="PROSITE" id="PS51671">
    <property type="entry name" value="ACT"/>
    <property type="match status" value="1"/>
</dbReference>
<feature type="chain" id="PRO_0000074963" description="Formyltetrahydrofolate deformylase">
    <location>
        <begin position="1"/>
        <end position="278"/>
    </location>
</feature>
<feature type="domain" description="ACT" evidence="1">
    <location>
        <begin position="6"/>
        <end position="85"/>
    </location>
</feature>
<feature type="active site" evidence="1">
    <location>
        <position position="223"/>
    </location>
</feature>
<feature type="sequence conflict" description="In Ref. 2; AAA24942." evidence="2" ref="2">
    <original>VIG</original>
    <variation>RNR</variation>
    <location>
        <begin position="115"/>
        <end position="117"/>
    </location>
</feature>
<feature type="sequence conflict" description="In Ref. 2; AAA24942." evidence="2" ref="2">
    <original>HEN</original>
    <variation>PK</variation>
    <location>
        <begin position="138"/>
        <end position="140"/>
    </location>
</feature>
<feature type="sequence conflict" description="In Ref. 2; AAA24942." evidence="2" ref="2">
    <original>K</original>
    <variation>E</variation>
    <location>
        <position position="205"/>
    </location>
</feature>
<sequence>MIEKKILLTDCPDDKGLIAKITNICYKHQLNILHNNEFVDFETKHFFMRTELEGIFNEATLLEDLKYSLPEETNCRLIGTQRKRIVILVTKEAHCLGDILMKNYYGALDVEIAAVIGNHDNLRELVERFNIPFHLVSHENLTRVEHDKLLAEKIDEYTPDYIVLAKYMRVLNPEFVARYPNRVINIHHSFLPAFIGAKPYQQAYKRGVKIIGATAHFINNELDQGPIIMQNVINVDHTYNAEAMMRAGRDVEKTVLSRALDLALHDRIFVYKNKTVVL</sequence>
<reference key="1">
    <citation type="journal article" date="1995" name="Science">
        <title>Whole-genome random sequencing and assembly of Haemophilus influenzae Rd.</title>
        <authorList>
            <person name="Fleischmann R.D."/>
            <person name="Adams M.D."/>
            <person name="White O."/>
            <person name="Clayton R.A."/>
            <person name="Kirkness E.F."/>
            <person name="Kerlavage A.R."/>
            <person name="Bult C.J."/>
            <person name="Tomb J.-F."/>
            <person name="Dougherty B.A."/>
            <person name="Merrick J.M."/>
            <person name="McKenney K."/>
            <person name="Sutton G.G."/>
            <person name="FitzHugh W."/>
            <person name="Fields C.A."/>
            <person name="Gocayne J.D."/>
            <person name="Scott J.D."/>
            <person name="Shirley R."/>
            <person name="Liu L.-I."/>
            <person name="Glodek A."/>
            <person name="Kelley J.M."/>
            <person name="Weidman J.F."/>
            <person name="Phillips C.A."/>
            <person name="Spriggs T."/>
            <person name="Hedblom E."/>
            <person name="Cotton M.D."/>
            <person name="Utterback T.R."/>
            <person name="Hanna M.C."/>
            <person name="Nguyen D.T."/>
            <person name="Saudek D.M."/>
            <person name="Brandon R.C."/>
            <person name="Fine L.D."/>
            <person name="Fritchman J.L."/>
            <person name="Fuhrmann J.L."/>
            <person name="Geoghagen N.S.M."/>
            <person name="Gnehm C.L."/>
            <person name="McDonald L.A."/>
            <person name="Small K.V."/>
            <person name="Fraser C.M."/>
            <person name="Smith H.O."/>
            <person name="Venter J.C."/>
        </authorList>
    </citation>
    <scope>NUCLEOTIDE SEQUENCE [LARGE SCALE GENOMIC DNA]</scope>
    <source>
        <strain>ATCC 51907 / DSM 11121 / KW20 / Rd</strain>
    </source>
</reference>
<reference key="2">
    <citation type="journal article" date="1993" name="Gene">
        <title>Cloning and sequencing of the Haemophilus influenzae aroA gene.</title>
        <authorList>
            <person name="Maskell D.J."/>
        </authorList>
    </citation>
    <scope>NUCLEOTIDE SEQUENCE [GENOMIC DNA] OF 64-278</scope>
    <source>
        <strain>RM 7004 / Serotype B</strain>
    </source>
</reference>
<gene>
    <name evidence="1" type="primary">purU</name>
    <name type="ordered locus">HI_1588</name>
</gene>
<comment type="function">
    <text evidence="1">Catalyzes the hydrolysis of 10-formyltetrahydrofolate (formyl-FH4) to formate and tetrahydrofolate (FH4).</text>
</comment>
<comment type="catalytic activity">
    <reaction evidence="1">
        <text>(6R)-10-formyltetrahydrofolate + H2O = (6S)-5,6,7,8-tetrahydrofolate + formate + H(+)</text>
        <dbReference type="Rhea" id="RHEA:19833"/>
        <dbReference type="ChEBI" id="CHEBI:15377"/>
        <dbReference type="ChEBI" id="CHEBI:15378"/>
        <dbReference type="ChEBI" id="CHEBI:15740"/>
        <dbReference type="ChEBI" id="CHEBI:57453"/>
        <dbReference type="ChEBI" id="CHEBI:195366"/>
        <dbReference type="EC" id="3.5.1.10"/>
    </reaction>
</comment>
<comment type="pathway">
    <text evidence="1">Purine metabolism; IMP biosynthesis via de novo pathway; formate from 10-formyl-5,6,7,8-tetrahydrofolate: step 1/1.</text>
</comment>
<comment type="similarity">
    <text evidence="1">Belongs to the PurU family.</text>
</comment>
<evidence type="ECO:0000255" key="1">
    <source>
        <dbReference type="HAMAP-Rule" id="MF_01927"/>
    </source>
</evidence>
<evidence type="ECO:0000305" key="2"/>
<name>PURU_HAEIN</name>